<gene>
    <name evidence="1" type="primary">E6</name>
</gene>
<organismHost>
    <name type="scientific">Homo sapiens</name>
    <name type="common">Human</name>
    <dbReference type="NCBI Taxonomy" id="9606"/>
</organismHost>
<proteinExistence type="inferred from homology"/>
<sequence>MSEENPCPRNIFLLCREYGLELEDLRILCVYCKRPLSDADVLAFAVKELFVVWRKGFPYGACEKCLIAAAKLRQYRHWHYSCYGDTVETETGIPIPQLFMRCYICHKPLCWEEKEALLVGNKRFHKISGQWTGHCMNCAPRCMENAPALRTSH</sequence>
<evidence type="ECO:0000255" key="1">
    <source>
        <dbReference type="HAMAP-Rule" id="MF_04006"/>
    </source>
</evidence>
<evidence type="ECO:0000305" key="2"/>
<comment type="function">
    <text evidence="1">Plays a major role in the induction and maintenance of cellular transformation. E6 associates with host UBE3A/E6-AP ubiquitin-protein ligase and modulates its activity. Sequesters tumor suppressor TP53 in the host cytoplasm and modulates its activity by interacting with host EP300 that results in the reduction of TP53 acetylation and activation. In turn, apoptosis induced by DNA damage is inhibited. E6 also protects host keratinocytes from apoptosis by mediating the degradation of host BAK1. May also inhibit host immune response.</text>
</comment>
<comment type="subunit">
    <text evidence="1">Forms homodimers. Interacts with ubiquitin-protein ligase UBE3A/E6-AP; this interaction stimulates UBE3A ubiquitin activity. Interacts with host TP53 and EP300; this interaction inhibits TP53 activity.</text>
</comment>
<comment type="subcellular location">
    <subcellularLocation>
        <location evidence="1">Host cytoplasm</location>
    </subcellularLocation>
    <subcellularLocation>
        <location evidence="1">Host nucleus</location>
    </subcellularLocation>
</comment>
<comment type="miscellaneous">
    <text evidence="1">Belongs to the low risk human alphapapillomavirus family. The cancer-causing human papillomavirus E6 protein has a unique carboxy terminal PDZ domain containing substrate but low risk E6s do not possess this domain.</text>
</comment>
<comment type="similarity">
    <text evidence="2">Belongs to the papillomaviridae E6 protein family.</text>
</comment>
<dbReference type="EMBL" id="X55965">
    <property type="protein sequence ID" value="CAA39430.1"/>
    <property type="molecule type" value="Genomic_DNA"/>
</dbReference>
<dbReference type="PIR" id="S15621">
    <property type="entry name" value="S15621"/>
</dbReference>
<dbReference type="SMR" id="P22158"/>
<dbReference type="Proteomes" id="UP000007667">
    <property type="component" value="Genome"/>
</dbReference>
<dbReference type="GO" id="GO:0030430">
    <property type="term" value="C:host cell cytoplasm"/>
    <property type="evidence" value="ECO:0007669"/>
    <property type="project" value="UniProtKB-SubCell"/>
</dbReference>
<dbReference type="GO" id="GO:0042025">
    <property type="term" value="C:host cell nucleus"/>
    <property type="evidence" value="ECO:0007669"/>
    <property type="project" value="UniProtKB-SubCell"/>
</dbReference>
<dbReference type="GO" id="GO:0003677">
    <property type="term" value="F:DNA binding"/>
    <property type="evidence" value="ECO:0007669"/>
    <property type="project" value="UniProtKB-UniRule"/>
</dbReference>
<dbReference type="GO" id="GO:0008270">
    <property type="term" value="F:zinc ion binding"/>
    <property type="evidence" value="ECO:0007669"/>
    <property type="project" value="UniProtKB-KW"/>
</dbReference>
<dbReference type="GO" id="GO:0006351">
    <property type="term" value="P:DNA-templated transcription"/>
    <property type="evidence" value="ECO:0007669"/>
    <property type="project" value="UniProtKB-UniRule"/>
</dbReference>
<dbReference type="GO" id="GO:0006355">
    <property type="term" value="P:regulation of DNA-templated transcription"/>
    <property type="evidence" value="ECO:0007669"/>
    <property type="project" value="UniProtKB-UniRule"/>
</dbReference>
<dbReference type="GO" id="GO:0052150">
    <property type="term" value="P:symbiont-mediated perturbation of host apoptosis"/>
    <property type="evidence" value="ECO:0007669"/>
    <property type="project" value="UniProtKB-KW"/>
</dbReference>
<dbReference type="GO" id="GO:0039648">
    <property type="term" value="P:symbiont-mediated perturbation of host ubiquitin-like protein modification"/>
    <property type="evidence" value="ECO:0007669"/>
    <property type="project" value="UniProtKB-UniRule"/>
</dbReference>
<dbReference type="GO" id="GO:0052170">
    <property type="term" value="P:symbiont-mediated suppression of host innate immune response"/>
    <property type="evidence" value="ECO:0007669"/>
    <property type="project" value="UniProtKB-KW"/>
</dbReference>
<dbReference type="GO" id="GO:0039502">
    <property type="term" value="P:symbiont-mediated suppression of host type I interferon-mediated signaling pathway"/>
    <property type="evidence" value="ECO:0007669"/>
    <property type="project" value="UniProtKB-UniRule"/>
</dbReference>
<dbReference type="Gene3D" id="3.30.240.40">
    <property type="entry name" value="E6 early regulatory protein"/>
    <property type="match status" value="2"/>
</dbReference>
<dbReference type="HAMAP" id="MF_04006">
    <property type="entry name" value="HPV_E6"/>
    <property type="match status" value="1"/>
</dbReference>
<dbReference type="InterPro" id="IPR001334">
    <property type="entry name" value="E6"/>
</dbReference>
<dbReference type="InterPro" id="IPR038575">
    <property type="entry name" value="E6_sf"/>
</dbReference>
<dbReference type="Pfam" id="PF00518">
    <property type="entry name" value="E6"/>
    <property type="match status" value="1"/>
</dbReference>
<dbReference type="SUPFAM" id="SSF161229">
    <property type="entry name" value="E6 C-terminal domain-like"/>
    <property type="match status" value="2"/>
</dbReference>
<protein>
    <recommendedName>
        <fullName evidence="1">Protein E6</fullName>
    </recommendedName>
</protein>
<reference key="1">
    <citation type="journal article" date="1990" name="Virus Res.">
        <title>A comparative sequence analysis of two human papillomavirus (HPV) types 2a and 57.</title>
        <authorList>
            <person name="Hirsch-Behnam A."/>
            <person name="Delius H."/>
            <person name="de Villiers E.M."/>
        </authorList>
    </citation>
    <scope>NUCLEOTIDE SEQUENCE [GENOMIC DNA]</scope>
</reference>
<feature type="chain" id="PRO_0000133373" description="Protein E6">
    <location>
        <begin position="1"/>
        <end position="153"/>
    </location>
</feature>
<feature type="zinc finger region" evidence="1">
    <location>
        <begin position="29"/>
        <end position="65"/>
    </location>
</feature>
<feature type="zinc finger region" evidence="1">
    <location>
        <begin position="102"/>
        <end position="138"/>
    </location>
</feature>
<accession>P22158</accession>
<name>VE6_HPV57</name>
<organism>
    <name type="scientific">Human papillomavirus 57</name>
    <dbReference type="NCBI Taxonomy" id="333753"/>
    <lineage>
        <taxon>Viruses</taxon>
        <taxon>Monodnaviria</taxon>
        <taxon>Shotokuvirae</taxon>
        <taxon>Cossaviricota</taxon>
        <taxon>Papovaviricetes</taxon>
        <taxon>Zurhausenvirales</taxon>
        <taxon>Papillomaviridae</taxon>
        <taxon>Firstpapillomavirinae</taxon>
        <taxon>Alphapapillomavirus</taxon>
        <taxon>Alphapapillomavirus 4</taxon>
    </lineage>
</organism>
<keyword id="KW-0010">Activator</keyword>
<keyword id="KW-0238">DNA-binding</keyword>
<keyword id="KW-0244">Early protein</keyword>
<keyword id="KW-1035">Host cytoplasm</keyword>
<keyword id="KW-1048">Host nucleus</keyword>
<keyword id="KW-0945">Host-virus interaction</keyword>
<keyword id="KW-1090">Inhibition of host innate immune response by virus</keyword>
<keyword id="KW-0479">Metal-binding</keyword>
<keyword id="KW-1119">Modulation of host cell apoptosis by virus</keyword>
<keyword id="KW-0804">Transcription</keyword>
<keyword id="KW-0805">Transcription regulation</keyword>
<keyword id="KW-0899">Viral immunoevasion</keyword>
<keyword id="KW-0862">Zinc</keyword>
<keyword id="KW-0863">Zinc-finger</keyword>